<feature type="chain" id="PRO_0000070963" description="Co-chaperone protein HscB homolog">
    <location>
        <begin position="1"/>
        <end position="175"/>
    </location>
</feature>
<feature type="domain" description="J" evidence="1">
    <location>
        <begin position="7"/>
        <end position="79"/>
    </location>
</feature>
<proteinExistence type="inferred from homology"/>
<organism>
    <name type="scientific">Burkholderia mallei (strain ATCC 23344)</name>
    <dbReference type="NCBI Taxonomy" id="243160"/>
    <lineage>
        <taxon>Bacteria</taxon>
        <taxon>Pseudomonadati</taxon>
        <taxon>Pseudomonadota</taxon>
        <taxon>Betaproteobacteria</taxon>
        <taxon>Burkholderiales</taxon>
        <taxon>Burkholderiaceae</taxon>
        <taxon>Burkholderia</taxon>
        <taxon>pseudomallei group</taxon>
    </lineage>
</organism>
<reference key="1">
    <citation type="journal article" date="2004" name="Proc. Natl. Acad. Sci. U.S.A.">
        <title>Structural flexibility in the Burkholderia mallei genome.</title>
        <authorList>
            <person name="Nierman W.C."/>
            <person name="DeShazer D."/>
            <person name="Kim H.S."/>
            <person name="Tettelin H."/>
            <person name="Nelson K.E."/>
            <person name="Feldblyum T.V."/>
            <person name="Ulrich R.L."/>
            <person name="Ronning C.M."/>
            <person name="Brinkac L.M."/>
            <person name="Daugherty S.C."/>
            <person name="Davidsen T.D."/>
            <person name="DeBoy R.T."/>
            <person name="Dimitrov G."/>
            <person name="Dodson R.J."/>
            <person name="Durkin A.S."/>
            <person name="Gwinn M.L."/>
            <person name="Haft D.H."/>
            <person name="Khouri H.M."/>
            <person name="Kolonay J.F."/>
            <person name="Madupu R."/>
            <person name="Mohammoud Y."/>
            <person name="Nelson W.C."/>
            <person name="Radune D."/>
            <person name="Romero C.M."/>
            <person name="Sarria S."/>
            <person name="Selengut J."/>
            <person name="Shamblin C."/>
            <person name="Sullivan S.A."/>
            <person name="White O."/>
            <person name="Yu Y."/>
            <person name="Zafar N."/>
            <person name="Zhou L."/>
            <person name="Fraser C.M."/>
        </authorList>
    </citation>
    <scope>NUCLEOTIDE SEQUENCE [LARGE SCALE GENOMIC DNA]</scope>
    <source>
        <strain>ATCC 23344</strain>
    </source>
</reference>
<protein>
    <recommendedName>
        <fullName evidence="1">Co-chaperone protein HscB homolog</fullName>
    </recommendedName>
</protein>
<evidence type="ECO:0000255" key="1">
    <source>
        <dbReference type="HAMAP-Rule" id="MF_00682"/>
    </source>
</evidence>
<comment type="function">
    <text evidence="1">Co-chaperone involved in the maturation of iron-sulfur cluster-containing proteins. Seems to help targeting proteins to be folded toward HscA.</text>
</comment>
<comment type="subunit">
    <text evidence="1">Interacts with HscA and stimulates its ATPase activity.</text>
</comment>
<comment type="similarity">
    <text evidence="1">Belongs to the HscB family.</text>
</comment>
<dbReference type="EMBL" id="CP000010">
    <property type="protein sequence ID" value="AAU47816.1"/>
    <property type="molecule type" value="Genomic_DNA"/>
</dbReference>
<dbReference type="RefSeq" id="WP_004202016.1">
    <property type="nucleotide sequence ID" value="NC_006348.1"/>
</dbReference>
<dbReference type="RefSeq" id="YP_103325.1">
    <property type="nucleotide sequence ID" value="NC_006348.1"/>
</dbReference>
<dbReference type="SMR" id="Q62IZ4"/>
<dbReference type="GeneID" id="93060843"/>
<dbReference type="KEGG" id="bma:BMA1705"/>
<dbReference type="PATRIC" id="fig|243160.12.peg.1747"/>
<dbReference type="eggNOG" id="COG1076">
    <property type="taxonomic scope" value="Bacteria"/>
</dbReference>
<dbReference type="HOGENOM" id="CLU_068529_2_1_4"/>
<dbReference type="Proteomes" id="UP000006693">
    <property type="component" value="Chromosome 1"/>
</dbReference>
<dbReference type="GO" id="GO:1990230">
    <property type="term" value="C:iron-sulfur cluster transfer complex"/>
    <property type="evidence" value="ECO:0007669"/>
    <property type="project" value="TreeGrafter"/>
</dbReference>
<dbReference type="GO" id="GO:0001671">
    <property type="term" value="F:ATPase activator activity"/>
    <property type="evidence" value="ECO:0007669"/>
    <property type="project" value="InterPro"/>
</dbReference>
<dbReference type="GO" id="GO:0051087">
    <property type="term" value="F:protein-folding chaperone binding"/>
    <property type="evidence" value="ECO:0007669"/>
    <property type="project" value="InterPro"/>
</dbReference>
<dbReference type="GO" id="GO:0044571">
    <property type="term" value="P:[2Fe-2S] cluster assembly"/>
    <property type="evidence" value="ECO:0007669"/>
    <property type="project" value="InterPro"/>
</dbReference>
<dbReference type="GO" id="GO:0051259">
    <property type="term" value="P:protein complex oligomerization"/>
    <property type="evidence" value="ECO:0007669"/>
    <property type="project" value="InterPro"/>
</dbReference>
<dbReference type="GO" id="GO:0006457">
    <property type="term" value="P:protein folding"/>
    <property type="evidence" value="ECO:0007669"/>
    <property type="project" value="UniProtKB-UniRule"/>
</dbReference>
<dbReference type="CDD" id="cd06257">
    <property type="entry name" value="DnaJ"/>
    <property type="match status" value="1"/>
</dbReference>
<dbReference type="Gene3D" id="1.10.287.110">
    <property type="entry name" value="DnaJ domain"/>
    <property type="match status" value="1"/>
</dbReference>
<dbReference type="Gene3D" id="1.20.1280.20">
    <property type="entry name" value="HscB, C-terminal domain"/>
    <property type="match status" value="1"/>
</dbReference>
<dbReference type="HAMAP" id="MF_00682">
    <property type="entry name" value="HscB"/>
    <property type="match status" value="1"/>
</dbReference>
<dbReference type="InterPro" id="IPR001623">
    <property type="entry name" value="DnaJ_domain"/>
</dbReference>
<dbReference type="InterPro" id="IPR004640">
    <property type="entry name" value="HscB"/>
</dbReference>
<dbReference type="InterPro" id="IPR036386">
    <property type="entry name" value="HscB_C_sf"/>
</dbReference>
<dbReference type="InterPro" id="IPR009073">
    <property type="entry name" value="HscB_oligo_C"/>
</dbReference>
<dbReference type="InterPro" id="IPR036869">
    <property type="entry name" value="J_dom_sf"/>
</dbReference>
<dbReference type="NCBIfam" id="TIGR00714">
    <property type="entry name" value="hscB"/>
    <property type="match status" value="1"/>
</dbReference>
<dbReference type="NCBIfam" id="NF002935">
    <property type="entry name" value="PRK03578.1"/>
    <property type="match status" value="1"/>
</dbReference>
<dbReference type="PANTHER" id="PTHR14021">
    <property type="entry name" value="IRON-SULFUR CLUSTER CO-CHAPERONE PROTEIN HSCB"/>
    <property type="match status" value="1"/>
</dbReference>
<dbReference type="PANTHER" id="PTHR14021:SF15">
    <property type="entry name" value="IRON-SULFUR CLUSTER CO-CHAPERONE PROTEIN HSCB"/>
    <property type="match status" value="1"/>
</dbReference>
<dbReference type="Pfam" id="PF07743">
    <property type="entry name" value="HSCB_C"/>
    <property type="match status" value="1"/>
</dbReference>
<dbReference type="SMART" id="SM00271">
    <property type="entry name" value="DnaJ"/>
    <property type="match status" value="1"/>
</dbReference>
<dbReference type="SUPFAM" id="SSF46565">
    <property type="entry name" value="Chaperone J-domain"/>
    <property type="match status" value="1"/>
</dbReference>
<dbReference type="SUPFAM" id="SSF47144">
    <property type="entry name" value="HSC20 (HSCB), C-terminal oligomerisation domain"/>
    <property type="match status" value="1"/>
</dbReference>
<dbReference type="PROSITE" id="PS50076">
    <property type="entry name" value="DNAJ_2"/>
    <property type="match status" value="1"/>
</dbReference>
<keyword id="KW-0143">Chaperone</keyword>
<keyword id="KW-1185">Reference proteome</keyword>
<name>HSCB_BURMA</name>
<accession>Q62IZ4</accession>
<gene>
    <name evidence="1" type="primary">hscB</name>
    <name type="ordered locus">BMA1705</name>
</gene>
<sequence length="175" mass="19583">MVSLKDSHFDLFHLPARFALDEPTLDAAYRAVQSQVHPDRFAAAGDAQKRIAMQWATRANEAYQTLRDPLKRATYLLHLRGVDVGAENNTAMEPAFLMQQMEWRERIEDAAGAKNVDALDALLAELRDERRARLAKLGALLDSGSDQGAAEAVRQLMFVERVSAEIGAQIERLEH</sequence>